<accession>P46388</accession>
<dbReference type="EMBL" id="L39923">
    <property type="protein sequence ID" value="AAB53141.1"/>
    <property type="status" value="ALT_INIT"/>
    <property type="molecule type" value="Genomic_DNA"/>
</dbReference>
<dbReference type="EMBL" id="AL583917">
    <property type="protein sequence ID" value="CAC29509.1"/>
    <property type="status" value="ALT_INIT"/>
    <property type="molecule type" value="Genomic_DNA"/>
</dbReference>
<dbReference type="PIR" id="A86909">
    <property type="entry name" value="A86909"/>
</dbReference>
<dbReference type="RefSeq" id="WP_231846662.1">
    <property type="nucleotide sequence ID" value="NC_002677.1"/>
</dbReference>
<dbReference type="SMR" id="P46388"/>
<dbReference type="STRING" id="272631.gene:17573810"/>
<dbReference type="KEGG" id="mle:ML0001"/>
<dbReference type="Leproma" id="ML0001"/>
<dbReference type="eggNOG" id="COG0593">
    <property type="taxonomic scope" value="Bacteria"/>
</dbReference>
<dbReference type="HOGENOM" id="CLU_026910_2_0_11"/>
<dbReference type="Proteomes" id="UP000000806">
    <property type="component" value="Chromosome"/>
</dbReference>
<dbReference type="GO" id="GO:0005737">
    <property type="term" value="C:cytoplasm"/>
    <property type="evidence" value="ECO:0007669"/>
    <property type="project" value="UniProtKB-SubCell"/>
</dbReference>
<dbReference type="GO" id="GO:0005886">
    <property type="term" value="C:plasma membrane"/>
    <property type="evidence" value="ECO:0007669"/>
    <property type="project" value="TreeGrafter"/>
</dbReference>
<dbReference type="GO" id="GO:0005524">
    <property type="term" value="F:ATP binding"/>
    <property type="evidence" value="ECO:0007669"/>
    <property type="project" value="UniProtKB-UniRule"/>
</dbReference>
<dbReference type="GO" id="GO:0016887">
    <property type="term" value="F:ATP hydrolysis activity"/>
    <property type="evidence" value="ECO:0007669"/>
    <property type="project" value="InterPro"/>
</dbReference>
<dbReference type="GO" id="GO:0003688">
    <property type="term" value="F:DNA replication origin binding"/>
    <property type="evidence" value="ECO:0007669"/>
    <property type="project" value="UniProtKB-UniRule"/>
</dbReference>
<dbReference type="GO" id="GO:0008289">
    <property type="term" value="F:lipid binding"/>
    <property type="evidence" value="ECO:0007669"/>
    <property type="project" value="UniProtKB-KW"/>
</dbReference>
<dbReference type="GO" id="GO:0006270">
    <property type="term" value="P:DNA replication initiation"/>
    <property type="evidence" value="ECO:0007669"/>
    <property type="project" value="UniProtKB-UniRule"/>
</dbReference>
<dbReference type="GO" id="GO:0006275">
    <property type="term" value="P:regulation of DNA replication"/>
    <property type="evidence" value="ECO:0007669"/>
    <property type="project" value="UniProtKB-UniRule"/>
</dbReference>
<dbReference type="CDD" id="cd00009">
    <property type="entry name" value="AAA"/>
    <property type="match status" value="1"/>
</dbReference>
<dbReference type="CDD" id="cd06571">
    <property type="entry name" value="Bac_DnaA_C"/>
    <property type="match status" value="1"/>
</dbReference>
<dbReference type="FunFam" id="1.10.1750.10:FF:000002">
    <property type="entry name" value="Chromosomal replication initiator protein DnaA"/>
    <property type="match status" value="1"/>
</dbReference>
<dbReference type="FunFam" id="1.10.8.60:FF:000003">
    <property type="entry name" value="Chromosomal replication initiator protein DnaA"/>
    <property type="match status" value="1"/>
</dbReference>
<dbReference type="FunFam" id="3.40.50.300:FF:000150">
    <property type="entry name" value="Chromosomal replication initiator protein DnaA"/>
    <property type="match status" value="1"/>
</dbReference>
<dbReference type="Gene3D" id="1.10.1750.10">
    <property type="match status" value="1"/>
</dbReference>
<dbReference type="Gene3D" id="1.10.8.60">
    <property type="match status" value="1"/>
</dbReference>
<dbReference type="Gene3D" id="3.30.300.180">
    <property type="match status" value="1"/>
</dbReference>
<dbReference type="Gene3D" id="3.40.50.300">
    <property type="entry name" value="P-loop containing nucleotide triphosphate hydrolases"/>
    <property type="match status" value="1"/>
</dbReference>
<dbReference type="HAMAP" id="MF_00377">
    <property type="entry name" value="DnaA_bact"/>
    <property type="match status" value="1"/>
</dbReference>
<dbReference type="InterPro" id="IPR003593">
    <property type="entry name" value="AAA+_ATPase"/>
</dbReference>
<dbReference type="InterPro" id="IPR001957">
    <property type="entry name" value="Chromosome_initiator_DnaA"/>
</dbReference>
<dbReference type="InterPro" id="IPR020591">
    <property type="entry name" value="Chromosome_initiator_DnaA-like"/>
</dbReference>
<dbReference type="InterPro" id="IPR018312">
    <property type="entry name" value="Chromosome_initiator_DnaA_CS"/>
</dbReference>
<dbReference type="InterPro" id="IPR013159">
    <property type="entry name" value="DnaA_C"/>
</dbReference>
<dbReference type="InterPro" id="IPR013317">
    <property type="entry name" value="DnaA_dom"/>
</dbReference>
<dbReference type="InterPro" id="IPR038454">
    <property type="entry name" value="DnaA_N_sf"/>
</dbReference>
<dbReference type="InterPro" id="IPR027417">
    <property type="entry name" value="P-loop_NTPase"/>
</dbReference>
<dbReference type="InterPro" id="IPR010921">
    <property type="entry name" value="Trp_repressor/repl_initiator"/>
</dbReference>
<dbReference type="NCBIfam" id="TIGR00362">
    <property type="entry name" value="DnaA"/>
    <property type="match status" value="1"/>
</dbReference>
<dbReference type="NCBIfam" id="NF010686">
    <property type="entry name" value="PRK14086.1"/>
    <property type="match status" value="1"/>
</dbReference>
<dbReference type="PANTHER" id="PTHR30050">
    <property type="entry name" value="CHROMOSOMAL REPLICATION INITIATOR PROTEIN DNAA"/>
    <property type="match status" value="1"/>
</dbReference>
<dbReference type="PANTHER" id="PTHR30050:SF2">
    <property type="entry name" value="CHROMOSOMAL REPLICATION INITIATOR PROTEIN DNAA"/>
    <property type="match status" value="1"/>
</dbReference>
<dbReference type="Pfam" id="PF00308">
    <property type="entry name" value="Bac_DnaA"/>
    <property type="match status" value="1"/>
</dbReference>
<dbReference type="Pfam" id="PF08299">
    <property type="entry name" value="Bac_DnaA_C"/>
    <property type="match status" value="1"/>
</dbReference>
<dbReference type="PRINTS" id="PR00051">
    <property type="entry name" value="DNAA"/>
</dbReference>
<dbReference type="SMART" id="SM00382">
    <property type="entry name" value="AAA"/>
    <property type="match status" value="1"/>
</dbReference>
<dbReference type="SMART" id="SM00760">
    <property type="entry name" value="Bac_DnaA_C"/>
    <property type="match status" value="1"/>
</dbReference>
<dbReference type="SUPFAM" id="SSF52540">
    <property type="entry name" value="P-loop containing nucleoside triphosphate hydrolases"/>
    <property type="match status" value="1"/>
</dbReference>
<dbReference type="SUPFAM" id="SSF48295">
    <property type="entry name" value="TrpR-like"/>
    <property type="match status" value="1"/>
</dbReference>
<dbReference type="PROSITE" id="PS01008">
    <property type="entry name" value="DNAA"/>
    <property type="match status" value="1"/>
</dbReference>
<proteinExistence type="inferred from homology"/>
<reference key="1">
    <citation type="journal article" date="1996" name="Microbiology">
        <title>Gene arrangement and organization in an approximately 76 kb fragment encompassing the oriC region of the chromosome of Mycobacterium leprae.</title>
        <authorList>
            <person name="Fsihi H."/>
            <person name="de Rossi E."/>
            <person name="Salazar L."/>
            <person name="Cantoni R."/>
            <person name="Labo M."/>
            <person name="Riccardi G."/>
            <person name="Takiff H.E."/>
            <person name="Eiglmeier K."/>
            <person name="Bergh S."/>
            <person name="Cole S.T."/>
        </authorList>
    </citation>
    <scope>NUCLEOTIDE SEQUENCE [GENOMIC DNA]</scope>
</reference>
<reference key="2">
    <citation type="journal article" date="2001" name="Nature">
        <title>Massive gene decay in the leprosy bacillus.</title>
        <authorList>
            <person name="Cole S.T."/>
            <person name="Eiglmeier K."/>
            <person name="Parkhill J."/>
            <person name="James K.D."/>
            <person name="Thomson N.R."/>
            <person name="Wheeler P.R."/>
            <person name="Honore N."/>
            <person name="Garnier T."/>
            <person name="Churcher C.M."/>
            <person name="Harris D.E."/>
            <person name="Mungall K.L."/>
            <person name="Basham D."/>
            <person name="Brown D."/>
            <person name="Chillingworth T."/>
            <person name="Connor R."/>
            <person name="Davies R.M."/>
            <person name="Devlin K."/>
            <person name="Duthoy S."/>
            <person name="Feltwell T."/>
            <person name="Fraser A."/>
            <person name="Hamlin N."/>
            <person name="Holroyd S."/>
            <person name="Hornsby T."/>
            <person name="Jagels K."/>
            <person name="Lacroix C."/>
            <person name="Maclean J."/>
            <person name="Moule S."/>
            <person name="Murphy L.D."/>
            <person name="Oliver K."/>
            <person name="Quail M.A."/>
            <person name="Rajandream M.A."/>
            <person name="Rutherford K.M."/>
            <person name="Rutter S."/>
            <person name="Seeger K."/>
            <person name="Simon S."/>
            <person name="Simmonds M."/>
            <person name="Skelton J."/>
            <person name="Squares R."/>
            <person name="Squares S."/>
            <person name="Stevens K."/>
            <person name="Taylor K."/>
            <person name="Whitehead S."/>
            <person name="Woodward J.R."/>
            <person name="Barrell B.G."/>
        </authorList>
    </citation>
    <scope>NUCLEOTIDE SEQUENCE [LARGE SCALE GENOMIC DNA]</scope>
    <source>
        <strain>TN</strain>
    </source>
</reference>
<evidence type="ECO:0000255" key="1">
    <source>
        <dbReference type="HAMAP-Rule" id="MF_00377"/>
    </source>
</evidence>
<evidence type="ECO:0000305" key="2"/>
<gene>
    <name evidence="1" type="primary">dnaA</name>
    <name type="ordered locus">ML0001</name>
</gene>
<name>DNAA_MYCLE</name>
<organism>
    <name type="scientific">Mycobacterium leprae (strain TN)</name>
    <dbReference type="NCBI Taxonomy" id="272631"/>
    <lineage>
        <taxon>Bacteria</taxon>
        <taxon>Bacillati</taxon>
        <taxon>Actinomycetota</taxon>
        <taxon>Actinomycetes</taxon>
        <taxon>Mycobacteriales</taxon>
        <taxon>Mycobacteriaceae</taxon>
        <taxon>Mycobacterium</taxon>
    </lineage>
</organism>
<comment type="function">
    <text evidence="1">Plays an essential role in the initiation and regulation of chromosomal replication. ATP-DnaA binds to the origin of replication (oriC) to initiate formation of the DNA replication initiation complex once per cell cycle. Binds the DnaA box (a 9 base pair repeat at the origin) and separates the double-stranded (ds)DNA. Forms a right-handed helical filament on oriC DNA; dsDNA binds to the exterior of the filament while single-stranded (ss)DNA is stabiized in the filament's interior. The ATP-DnaA-oriC complex binds and stabilizes one strand of the AT-rich DNA unwinding element (DUE), permitting loading of DNA polymerase. After initiation quickly degrades to an ADP-DnaA complex that is not apt for DNA replication. Binds acidic phospholipids.</text>
</comment>
<comment type="subunit">
    <text evidence="1">Oligomerizes as a right-handed, spiral filament on DNA at oriC.</text>
</comment>
<comment type="subcellular location">
    <subcellularLocation>
        <location evidence="1">Cytoplasm</location>
    </subcellularLocation>
</comment>
<comment type="domain">
    <text evidence="1">Domain I is involved in oligomerization and binding regulators, domain II is flexibile and of varying length in different bacteria, domain III forms the AAA+ region, while domain IV binds dsDNA.</text>
</comment>
<comment type="similarity">
    <text evidence="1">Belongs to the DnaA family.</text>
</comment>
<comment type="sequence caution" evidence="2">
    <conflict type="erroneous initiation">
        <sequence resource="EMBL-CDS" id="AAB53141"/>
    </conflict>
</comment>
<comment type="sequence caution" evidence="2">
    <conflict type="erroneous initiation">
        <sequence resource="EMBL-CDS" id="CAC29509"/>
    </conflict>
</comment>
<sequence length="502" mass="56314">MADDLSLGFTTVWNAVVSELNGESNTDDEATNDSTLVTPLTPQQRAWLNLVQPLTIIEGFALLSVPSSFVQNEIERHLRTPITDALSRRLGQQIQLGVRIAPPSTDHIDDNSSSADVLLTDDCGTDTDENYGEPLTGEYQGLPTYFTERPHHTESTVTGGTSLNRRYTFETFVIGASNRFAHAAALAIAEAPARAYNPLFIWGESGLGKTHLLHAAGNYAQRLFPGMRVKYVSTEEFTNDFINSLRDDRKVAFKRSYRDVDVLLVDDIQFIEGKEGIQEEFFHTFNTLHNANKQIVISSDRPPKQLATLEDRLRTRFEWGLITDVQPPELETRIAILRKKAQMERLAVPGDVLELIASSIERNIRELEGALIRVTAFASLNKTAIDKALAEIVLRDLIADASTMQISAATIMTATAEYFDTTIEELRGPGKTRALAQSRQIAMYLCRELTDLSLPKIGQAFGRDHTTVMYAQRKILSEMAERREVFDHVKELTTRIRQRSKR</sequence>
<protein>
    <recommendedName>
        <fullName evidence="1">Chromosomal replication initiator protein DnaA</fullName>
    </recommendedName>
</protein>
<feature type="chain" id="PRO_0000114212" description="Chromosomal replication initiator protein DnaA">
    <location>
        <begin position="1"/>
        <end position="502"/>
    </location>
</feature>
<feature type="region of interest" description="Domain I, interacts with DnaA modulators" evidence="1">
    <location>
        <begin position="1"/>
        <end position="112"/>
    </location>
</feature>
<feature type="region of interest" description="Domain II" evidence="1">
    <location>
        <begin position="113"/>
        <end position="161"/>
    </location>
</feature>
<feature type="region of interest" description="Domain III, AAA+ region" evidence="1">
    <location>
        <begin position="162"/>
        <end position="378"/>
    </location>
</feature>
<feature type="region of interest" description="Domain IV, binds dsDNA" evidence="1">
    <location>
        <begin position="379"/>
        <end position="502"/>
    </location>
</feature>
<feature type="binding site" evidence="1">
    <location>
        <position position="206"/>
    </location>
    <ligand>
        <name>ATP</name>
        <dbReference type="ChEBI" id="CHEBI:30616"/>
    </ligand>
</feature>
<feature type="binding site" evidence="1">
    <location>
        <position position="208"/>
    </location>
    <ligand>
        <name>ATP</name>
        <dbReference type="ChEBI" id="CHEBI:30616"/>
    </ligand>
</feature>
<feature type="binding site" evidence="1">
    <location>
        <position position="209"/>
    </location>
    <ligand>
        <name>ATP</name>
        <dbReference type="ChEBI" id="CHEBI:30616"/>
    </ligand>
</feature>
<feature type="binding site" evidence="1">
    <location>
        <position position="210"/>
    </location>
    <ligand>
        <name>ATP</name>
        <dbReference type="ChEBI" id="CHEBI:30616"/>
    </ligand>
</feature>
<feature type="sequence conflict" description="In Ref. 1; AAB53141." evidence="2" ref="1">
    <original>A</original>
    <variation>R</variation>
    <location>
        <position position="183"/>
    </location>
</feature>
<keyword id="KW-0067">ATP-binding</keyword>
<keyword id="KW-0963">Cytoplasm</keyword>
<keyword id="KW-0235">DNA replication</keyword>
<keyword id="KW-0238">DNA-binding</keyword>
<keyword id="KW-0446">Lipid-binding</keyword>
<keyword id="KW-0547">Nucleotide-binding</keyword>
<keyword id="KW-1185">Reference proteome</keyword>